<keyword id="KW-0903">Direct protein sequencing</keyword>
<keyword id="KW-0378">Hydrolase</keyword>
<keyword id="KW-0443">Lipid metabolism</keyword>
<keyword id="KW-0472">Membrane</keyword>
<keyword id="KW-1185">Reference proteome</keyword>
<keyword id="KW-0812">Transmembrane</keyword>
<keyword id="KW-1133">Transmembrane helix</keyword>
<name>ABHGA_MOUSE</name>
<dbReference type="EC" id="3.1.-.-" evidence="5"/>
<dbReference type="EC" id="3.1.1.23" evidence="4"/>
<dbReference type="EMBL" id="AF109905">
    <property type="protein sequence ID" value="AAC84159.1"/>
    <property type="molecule type" value="Genomic_DNA"/>
</dbReference>
<dbReference type="EMBL" id="BC029114">
    <property type="protein sequence ID" value="AAH29114.1"/>
    <property type="molecule type" value="mRNA"/>
</dbReference>
<dbReference type="CCDS" id="CCDS28681.1"/>
<dbReference type="RefSeq" id="NP_848707.1">
    <property type="nucleotide sequence ID" value="NM_178592.4"/>
</dbReference>
<dbReference type="SMR" id="Q9Z1Q2"/>
<dbReference type="BioGRID" id="228757">
    <property type="interactions" value="4"/>
</dbReference>
<dbReference type="FunCoup" id="Q9Z1Q2">
    <property type="interactions" value="2534"/>
</dbReference>
<dbReference type="STRING" id="10090.ENSMUSP00000007251"/>
<dbReference type="ChEMBL" id="CHEMBL5184"/>
<dbReference type="SwissLipids" id="SLP:000001040"/>
<dbReference type="ESTHER" id="mouse-Abhd16a">
    <property type="family name" value="ABHD16"/>
</dbReference>
<dbReference type="MEROPS" id="S09.022"/>
<dbReference type="GlyGen" id="Q9Z1Q2">
    <property type="glycosylation" value="1 site, 1 N-linked glycan (1 site)"/>
</dbReference>
<dbReference type="iPTMnet" id="Q9Z1Q2"/>
<dbReference type="PhosphoSitePlus" id="Q9Z1Q2"/>
<dbReference type="SwissPalm" id="Q9Z1Q2"/>
<dbReference type="CPTAC" id="non-CPTAC-3683"/>
<dbReference type="PaxDb" id="10090-ENSMUSP00000007251"/>
<dbReference type="PeptideAtlas" id="Q9Z1Q2"/>
<dbReference type="ProteomicsDB" id="285829"/>
<dbReference type="Pumba" id="Q9Z1Q2"/>
<dbReference type="Antibodypedia" id="27504">
    <property type="antibodies" value="92 antibodies from 18 providers"/>
</dbReference>
<dbReference type="DNASU" id="193742"/>
<dbReference type="Ensembl" id="ENSMUST00000007251.14">
    <property type="protein sequence ID" value="ENSMUSP00000007251.8"/>
    <property type="gene ID" value="ENSMUSG00000007036.16"/>
</dbReference>
<dbReference type="GeneID" id="193742"/>
<dbReference type="KEGG" id="mmu:193742"/>
<dbReference type="UCSC" id="uc008cfq.1">
    <property type="organism name" value="mouse"/>
</dbReference>
<dbReference type="AGR" id="MGI:99476"/>
<dbReference type="CTD" id="7920"/>
<dbReference type="MGI" id="MGI:99476">
    <property type="gene designation" value="Abhd16a"/>
</dbReference>
<dbReference type="VEuPathDB" id="HostDB:ENSMUSG00000007036"/>
<dbReference type="eggNOG" id="KOG1553">
    <property type="taxonomic scope" value="Eukaryota"/>
</dbReference>
<dbReference type="GeneTree" id="ENSGT00940000160908"/>
<dbReference type="HOGENOM" id="CLU_040705_2_0_1"/>
<dbReference type="InParanoid" id="Q9Z1Q2"/>
<dbReference type="OMA" id="THCTQLP"/>
<dbReference type="OrthoDB" id="6412627at2759"/>
<dbReference type="PhylomeDB" id="Q9Z1Q2"/>
<dbReference type="TreeFam" id="TF314267"/>
<dbReference type="BioGRID-ORCS" id="193742">
    <property type="hits" value="5 hits in 76 CRISPR screens"/>
</dbReference>
<dbReference type="CD-CODE" id="CE726F99">
    <property type="entry name" value="Postsynaptic density"/>
</dbReference>
<dbReference type="PRO" id="PR:Q9Z1Q2"/>
<dbReference type="Proteomes" id="UP000000589">
    <property type="component" value="Chromosome 17"/>
</dbReference>
<dbReference type="RNAct" id="Q9Z1Q2">
    <property type="molecule type" value="protein"/>
</dbReference>
<dbReference type="Bgee" id="ENSMUSG00000007036">
    <property type="expression patterns" value="Expressed in cerebellar cortex and 263 other cell types or tissues"/>
</dbReference>
<dbReference type="ExpressionAtlas" id="Q9Z1Q2">
    <property type="expression patterns" value="baseline and differential"/>
</dbReference>
<dbReference type="GO" id="GO:0016020">
    <property type="term" value="C:membrane"/>
    <property type="evidence" value="ECO:0007669"/>
    <property type="project" value="UniProtKB-SubCell"/>
</dbReference>
<dbReference type="GO" id="GO:0047372">
    <property type="term" value="F:monoacylglycerol lipase activity"/>
    <property type="evidence" value="ECO:0000314"/>
    <property type="project" value="UniProtKB"/>
</dbReference>
<dbReference type="GO" id="GO:0004620">
    <property type="term" value="F:phospholipase activity"/>
    <property type="evidence" value="ECO:0000314"/>
    <property type="project" value="UniProtKB"/>
</dbReference>
<dbReference type="GO" id="GO:0052651">
    <property type="term" value="P:monoacylglycerol catabolic process"/>
    <property type="evidence" value="ECO:0000314"/>
    <property type="project" value="UniProtKB"/>
</dbReference>
<dbReference type="GO" id="GO:0006660">
    <property type="term" value="P:phosphatidylserine catabolic process"/>
    <property type="evidence" value="ECO:0000314"/>
    <property type="project" value="UniProtKB"/>
</dbReference>
<dbReference type="GO" id="GO:1905344">
    <property type="term" value="P:prostaglandin catabolic process"/>
    <property type="evidence" value="ECO:0000314"/>
    <property type="project" value="BHF-UCL"/>
</dbReference>
<dbReference type="FunFam" id="3.40.50.1820:FF:000074">
    <property type="entry name" value="Abhydrolase domain containing 16A"/>
    <property type="match status" value="1"/>
</dbReference>
<dbReference type="Gene3D" id="3.40.50.1820">
    <property type="entry name" value="alpha/beta hydrolase"/>
    <property type="match status" value="1"/>
</dbReference>
<dbReference type="InterPro" id="IPR000073">
    <property type="entry name" value="AB_hydrolase_1"/>
</dbReference>
<dbReference type="InterPro" id="IPR029058">
    <property type="entry name" value="AB_hydrolase_fold"/>
</dbReference>
<dbReference type="InterPro" id="IPR054518">
    <property type="entry name" value="ABHD16_N"/>
</dbReference>
<dbReference type="PANTHER" id="PTHR12277">
    <property type="entry name" value="ALPHA/BETA HYDROLASE DOMAIN-CONTAINING PROTEIN"/>
    <property type="match status" value="1"/>
</dbReference>
<dbReference type="PANTHER" id="PTHR12277:SF54">
    <property type="entry name" value="PHOSPHATIDYLSERINE LIPASE ABHD16A"/>
    <property type="match status" value="1"/>
</dbReference>
<dbReference type="Pfam" id="PF22990">
    <property type="entry name" value="ABHD16_N"/>
    <property type="match status" value="1"/>
</dbReference>
<dbReference type="Pfam" id="PF00561">
    <property type="entry name" value="Abhydrolase_1"/>
    <property type="match status" value="1"/>
</dbReference>
<dbReference type="SUPFAM" id="SSF53474">
    <property type="entry name" value="alpha/beta-Hydrolases"/>
    <property type="match status" value="1"/>
</dbReference>
<protein>
    <recommendedName>
        <fullName evidence="7">Phosphatidylserine lipase ABHD16A</fullName>
        <ecNumber evidence="5">3.1.-.-</ecNumber>
    </recommendedName>
    <alternativeName>
        <fullName evidence="7">Alpha/beta hydrolase domain-containing protein 16A</fullName>
        <shortName evidence="7">Abhydrolase domain-containing protein 16A</shortName>
    </alternativeName>
    <alternativeName>
        <fullName evidence="6">HLA-B-associated transcript 5</fullName>
        <shortName evidence="6">mBAT5</shortName>
    </alternativeName>
    <alternativeName>
        <fullName evidence="7">Monoacylglycerol lipase ABHD16A</fullName>
        <ecNumber evidence="4">3.1.1.23</ecNumber>
    </alternativeName>
</protein>
<accession>Q9Z1Q2</accession>
<proteinExistence type="evidence at protein level"/>
<feature type="chain" id="PRO_0000064834" description="Phosphatidylserine lipase ABHD16A">
    <location>
        <begin position="1"/>
        <end position="558"/>
    </location>
</feature>
<feature type="transmembrane region" description="Helical" evidence="3">
    <location>
        <begin position="60"/>
        <end position="80"/>
    </location>
</feature>
<feature type="transmembrane region" description="Helical" evidence="3">
    <location>
        <begin position="93"/>
        <end position="113"/>
    </location>
</feature>
<feature type="topological domain" description="Cytoplasmic" evidence="8">
    <location>
        <begin position="114"/>
        <end position="558"/>
    </location>
</feature>
<feature type="domain" description="AB hydrolase-1" evidence="3">
    <location>
        <begin position="281"/>
        <end position="406"/>
    </location>
</feature>
<feature type="active site" description="Charge relay system" evidence="2">
    <location>
        <position position="355"/>
    </location>
</feature>
<feature type="active site" description="Charge relay system" evidence="2">
    <location>
        <position position="430"/>
    </location>
</feature>
<feature type="active site" description="Charge relay system" evidence="2">
    <location>
        <position position="507"/>
    </location>
</feature>
<gene>
    <name evidence="9" type="primary">Abhd16a</name>
    <name evidence="6" type="synonym">Bat5</name>
    <name type="synonym">Ng26</name>
</gene>
<evidence type="ECO:0000250" key="1">
    <source>
        <dbReference type="UniProtKB" id="O95870"/>
    </source>
</evidence>
<evidence type="ECO:0000250" key="2">
    <source>
        <dbReference type="UniProtKB" id="Q8N2K0"/>
    </source>
</evidence>
<evidence type="ECO:0000255" key="3"/>
<evidence type="ECO:0000269" key="4">
    <source>
    </source>
</evidence>
<evidence type="ECO:0000269" key="5">
    <source>
    </source>
</evidence>
<evidence type="ECO:0000303" key="6">
    <source>
    </source>
</evidence>
<evidence type="ECO:0000305" key="7"/>
<evidence type="ECO:0000305" key="8">
    <source>
    </source>
</evidence>
<evidence type="ECO:0000312" key="9">
    <source>
        <dbReference type="MGI" id="MGI:99476"/>
    </source>
</evidence>
<organism>
    <name type="scientific">Mus musculus</name>
    <name type="common">Mouse</name>
    <dbReference type="NCBI Taxonomy" id="10090"/>
    <lineage>
        <taxon>Eukaryota</taxon>
        <taxon>Metazoa</taxon>
        <taxon>Chordata</taxon>
        <taxon>Craniata</taxon>
        <taxon>Vertebrata</taxon>
        <taxon>Euteleostomi</taxon>
        <taxon>Mammalia</taxon>
        <taxon>Eutheria</taxon>
        <taxon>Euarchontoglires</taxon>
        <taxon>Glires</taxon>
        <taxon>Rodentia</taxon>
        <taxon>Myomorpha</taxon>
        <taxon>Muroidea</taxon>
        <taxon>Muridae</taxon>
        <taxon>Murinae</taxon>
        <taxon>Mus</taxon>
        <taxon>Mus</taxon>
    </lineage>
</organism>
<sequence>MAKLLSCVLGPRLYKIYRERDTDRAASSVPETPTAVPAASSSSWDTYYQPRALEKHADSILALASVFWSISYYSSPFAFFYLYRKGYLSLSKVVPFSHYAGTLLLLLAGVACLRGIGRWTNPQYRQFITILEATHRNQSAENKRQLANYNFDFRSWPVDFHWEEPSSRKGSRGGPSRRGVALLRPEPLHRGTADTFLNRVKKLPCQITSYLVAHTLGRRMLYPGSVYLLQKALMPVLLQGQARLVEECNGRRAKLLACDGNEIDTMFVDRRGTAEPQGQKLVICCEGNAGFYEVGCVSTPLEAGYSVLGWNHPGFAGSTGVPFPQNEANAMDVVVQFAIHRLGFQPQDIVIYAWSIGGFTATWAAMSYPDISAVILDASFDDLVPLALKVMPDSWRALVTRTVRQHLNLNNSEQLCRFQGPVLLVRRTKDEIITTTVPEDIMSNRGNDLLLKLLQFRYPRVMVEEGLRAVRQWLEASSQLEEASIYSRWEVEEDWCVSVLRSYQAEHGPDFPWSVGEDMSADGRRQLALFLARKHLHNFEATHCTPLPAQHFQMPWHL</sequence>
<reference key="1">
    <citation type="journal article" date="2003" name="Genome Res.">
        <title>Analysis of the gene-dense major histocompatibility complex class III region and its comparison to mouse.</title>
        <authorList>
            <person name="Xie T."/>
            <person name="Rowen L."/>
            <person name="Aguado B."/>
            <person name="Ahearn M.E."/>
            <person name="Madan A."/>
            <person name="Qin S."/>
            <person name="Campbell R.D."/>
            <person name="Hood L."/>
        </authorList>
    </citation>
    <scope>NUCLEOTIDE SEQUENCE [LARGE SCALE GENOMIC DNA]</scope>
    <source>
        <strain>129</strain>
    </source>
</reference>
<reference key="2">
    <citation type="journal article" date="2004" name="Genome Res.">
        <title>The status, quality, and expansion of the NIH full-length cDNA project: the Mammalian Gene Collection (MGC).</title>
        <authorList>
            <consortium name="The MGC Project Team"/>
        </authorList>
    </citation>
    <scope>NUCLEOTIDE SEQUENCE [LARGE SCALE MRNA]</scope>
</reference>
<reference key="3">
    <citation type="submission" date="2007-04" db="UniProtKB">
        <authorList>
            <person name="Lubec G."/>
            <person name="Kang S.U."/>
        </authorList>
    </citation>
    <scope>PROTEIN SEQUENCE OF 418-426</scope>
    <scope>IDENTIFICATION BY MASS SPECTROMETRY</scope>
    <source>
        <strain>C57BL/6J</strain>
        <tissue>Brain</tissue>
    </source>
</reference>
<reference key="4">
    <citation type="journal article" date="2010" name="Cell">
        <title>A tissue-specific atlas of mouse protein phosphorylation and expression.</title>
        <authorList>
            <person name="Huttlin E.L."/>
            <person name="Jedrychowski M.P."/>
            <person name="Elias J.E."/>
            <person name="Goswami T."/>
            <person name="Rad R."/>
            <person name="Beausoleil S.A."/>
            <person name="Villen J."/>
            <person name="Haas W."/>
            <person name="Sowa M.E."/>
            <person name="Gygi S.P."/>
        </authorList>
    </citation>
    <scope>IDENTIFICATION BY MASS SPECTROMETRY [LARGE SCALE ANALYSIS]</scope>
    <source>
        <tissue>Brain</tissue>
        <tissue>Heart</tissue>
        <tissue>Kidney</tissue>
        <tissue>Lung</tissue>
        <tissue>Spleen</tissue>
        <tissue>Testis</tissue>
    </source>
</reference>
<reference key="5">
    <citation type="journal article" date="2014" name="PLoS ONE">
        <title>Biochemical and pharmacological characterization of the human lymphocyte antigen B-associated transcript 5 (BAT5/ABHD16A).</title>
        <authorList>
            <person name="Savinainen J.R."/>
            <person name="Patel J.Z."/>
            <person name="Parkkari T."/>
            <person name="Navia-Paldanius D."/>
            <person name="Marjamaa J.J."/>
            <person name="Laitinen T."/>
            <person name="Nevalainen T."/>
            <person name="Laitinen J.T."/>
        </authorList>
    </citation>
    <scope>FUNCTION</scope>
    <scope>CATALYTIC ACTIVITY</scope>
</reference>
<reference key="6">
    <citation type="journal article" date="2015" name="Nat. Chem. Biol.">
        <title>Immunomodulatory lysophosphatidylserines are regulated by ABHD16A and ABHD12 interplay.</title>
        <authorList>
            <person name="Kamat S.S."/>
            <person name="Camara K."/>
            <person name="Parsons W.H."/>
            <person name="Chen D.H."/>
            <person name="Dix M.M."/>
            <person name="Bird T.D."/>
            <person name="Howell A.R."/>
            <person name="Cravatt B.F."/>
        </authorList>
    </citation>
    <scope>FUNCTION</scope>
    <scope>CATALYTIC ACTIVITY</scope>
    <scope>BIOPHYSICOCHEMICAL PROPERTIES</scope>
    <scope>ACTIVITY REGULATION</scope>
    <scope>DISRUPTION PHENOTYPE</scope>
</reference>
<comment type="function">
    <text evidence="1 4 5">Phosphatidylserine (PS) lipase that mediates the hydrolysis of phosphatidylserine to generate lysophosphatidylserine (LPS) (PubMed:25580854). LPS constitutes a class of signaling lipids that regulates immunological and neurological processes (PubMed:25580854). Has no activity towards diacylglycerol, triacylglycerol or lysophosphatidylserine lipase (By similarity). Also has monoacylglycerol lipase activity, with preference for 1-(9Z,12Z-octadecadienoyl)-glycerol (1-LG) and 2-glyceryl-15-deoxy-Delta(12,14)-prostaglandin J2 (15d-PGJ(2)-G) (PubMed:25290914).</text>
</comment>
<comment type="catalytic activity">
    <reaction evidence="5">
        <text>1-heptadecanoyl-2-(5Z,8Z,11Z,14Z-eicosatetraenoyl)-sn-glycero-3-phosphoserine + H2O = 1-heptadecanoyl-sn-glycero-3-phosphoserine + (5Z,8Z,11Z,14Z)-eicosatetraenoate + H(+)</text>
        <dbReference type="Rhea" id="RHEA:44500"/>
        <dbReference type="ChEBI" id="CHEBI:15377"/>
        <dbReference type="ChEBI" id="CHEBI:15378"/>
        <dbReference type="ChEBI" id="CHEBI:32395"/>
        <dbReference type="ChEBI" id="CHEBI:84461"/>
        <dbReference type="ChEBI" id="CHEBI:84462"/>
    </reaction>
    <physiologicalReaction direction="left-to-right" evidence="5">
        <dbReference type="Rhea" id="RHEA:44501"/>
    </physiologicalReaction>
</comment>
<comment type="catalytic activity">
    <reaction evidence="5">
        <text>1-hexadecanoyl-2-(9Z-octadecenoyl)-sn-glycero-3-phospho-L-serine + H2O = 1-hexadecanoyl-sn-glycero-3-phospho-L-serine + (9Z)-octadecenoate + H(+)</text>
        <dbReference type="Rhea" id="RHEA:41752"/>
        <dbReference type="ChEBI" id="CHEBI:15377"/>
        <dbReference type="ChEBI" id="CHEBI:15378"/>
        <dbReference type="ChEBI" id="CHEBI:30823"/>
        <dbReference type="ChEBI" id="CHEBI:75020"/>
        <dbReference type="ChEBI" id="CHEBI:75029"/>
    </reaction>
    <physiologicalReaction direction="left-to-right" evidence="5">
        <dbReference type="Rhea" id="RHEA:41753"/>
    </physiologicalReaction>
</comment>
<comment type="catalytic activity">
    <reaction evidence="5">
        <text>1-octadecanoyl-2-(9Z,12Z-octadecadienoyl)-sn-glycero-3-phosphoserine + H2O = 1-octadecanoyl-sn-glycero-3-phosphoserine + (9Z,12Z)-octadecadienoate + H(+)</text>
        <dbReference type="Rhea" id="RHEA:44516"/>
        <dbReference type="ChEBI" id="CHEBI:15377"/>
        <dbReference type="ChEBI" id="CHEBI:15378"/>
        <dbReference type="ChEBI" id="CHEBI:30245"/>
        <dbReference type="ChEBI" id="CHEBI:84466"/>
        <dbReference type="ChEBI" id="CHEBI:84467"/>
    </reaction>
    <physiologicalReaction direction="left-to-right" evidence="5">
        <dbReference type="Rhea" id="RHEA:44517"/>
    </physiologicalReaction>
</comment>
<comment type="catalytic activity">
    <reaction evidence="5">
        <text>1-heptadecanoyl-2-(5Z,8Z,11Z,14Z-eicosatetraenoyl)-sn-glycero-3-phosphocholine + H2O = 1-heptadecanoyl-sn-glycero-3-phosphocholine + (5Z,8Z,11Z,14Z)-eicosatetraenoate + H(+)</text>
        <dbReference type="Rhea" id="RHEA:44520"/>
        <dbReference type="ChEBI" id="CHEBI:15377"/>
        <dbReference type="ChEBI" id="CHEBI:15378"/>
        <dbReference type="ChEBI" id="CHEBI:32395"/>
        <dbReference type="ChEBI" id="CHEBI:74340"/>
        <dbReference type="ChEBI" id="CHEBI:84470"/>
    </reaction>
    <physiologicalReaction direction="left-to-right" evidence="5">
        <dbReference type="Rhea" id="RHEA:44521"/>
    </physiologicalReaction>
</comment>
<comment type="catalytic activity">
    <reaction evidence="5">
        <text>1-hexadecanoyl-2-(9Z-octadecenoyl)-sn-glycero-3-phosphoglycerol + H2O = 1-hexadecanoyl-sn-glycero-3-phosphoglycerol + (9Z)-octadecenoate + H(+)</text>
        <dbReference type="Rhea" id="RHEA:44524"/>
        <dbReference type="ChEBI" id="CHEBI:15377"/>
        <dbReference type="ChEBI" id="CHEBI:15378"/>
        <dbReference type="ChEBI" id="CHEBI:30823"/>
        <dbReference type="ChEBI" id="CHEBI:84472"/>
        <dbReference type="ChEBI" id="CHEBI:84475"/>
    </reaction>
    <physiologicalReaction direction="left-to-right" evidence="5">
        <dbReference type="Rhea" id="RHEA:44525"/>
    </physiologicalReaction>
</comment>
<comment type="catalytic activity">
    <reaction evidence="5">
        <text>1-hexadecanoyl-2-(9Z-octadecenoyl)-sn-glycero-3-phospho-(1D-myo-inositol) + H2O = 1-hexadecanoyl-sn-glycero-3-phospho-(1D-myo-inositol) + (9Z)-octadecenoate + H(+)</text>
        <dbReference type="Rhea" id="RHEA:44528"/>
        <dbReference type="ChEBI" id="CHEBI:15377"/>
        <dbReference type="ChEBI" id="CHEBI:15378"/>
        <dbReference type="ChEBI" id="CHEBI:30823"/>
        <dbReference type="ChEBI" id="CHEBI:72833"/>
        <dbReference type="ChEBI" id="CHEBI:72837"/>
    </reaction>
    <physiologicalReaction direction="left-to-right" evidence="5">
        <dbReference type="Rhea" id="RHEA:44529"/>
    </physiologicalReaction>
</comment>
<comment type="catalytic activity">
    <reaction evidence="5">
        <text>1-heptadecanoyl-2-(5Z,8Z,11Z,14Z-eicosatetraenoyl)-sn-glycero-3-phosphoethanolamine + H2O = 1-heptadecanoyl-sn-glycero-3-phosphoethanolamine + (5Z,8Z,11Z,14Z)-eicosatetraenoate + H(+)</text>
        <dbReference type="Rhea" id="RHEA:44540"/>
        <dbReference type="ChEBI" id="CHEBI:15377"/>
        <dbReference type="ChEBI" id="CHEBI:15378"/>
        <dbReference type="ChEBI" id="CHEBI:32395"/>
        <dbReference type="ChEBI" id="CHEBI:84489"/>
        <dbReference type="ChEBI" id="CHEBI:84490"/>
    </reaction>
    <physiologicalReaction direction="left-to-right" evidence="5">
        <dbReference type="Rhea" id="RHEA:44541"/>
    </physiologicalReaction>
</comment>
<comment type="catalytic activity">
    <reaction evidence="5">
        <text>1-hexadecanoyl-2-(9Z-octadecenoyl)-sn-glycero-3-phospho-(1'-sn-glycerol) + H2O = 1-hexadecanoyl-sn-glycero-3-phospho-(1'-sn-glycerol) + (9Z)-octadecenoate + H(+)</text>
        <dbReference type="Rhea" id="RHEA:40919"/>
        <dbReference type="ChEBI" id="CHEBI:15377"/>
        <dbReference type="ChEBI" id="CHEBI:15378"/>
        <dbReference type="ChEBI" id="CHEBI:30823"/>
        <dbReference type="ChEBI" id="CHEBI:72841"/>
        <dbReference type="ChEBI" id="CHEBI:75158"/>
    </reaction>
    <physiologicalReaction direction="left-to-right" evidence="5">
        <dbReference type="Rhea" id="RHEA:40920"/>
    </physiologicalReaction>
</comment>
<comment type="catalytic activity">
    <reaction evidence="1">
        <text>Hydrolyzes glycerol monoesters of long-chain fatty acids.</text>
        <dbReference type="EC" id="3.1.1.23"/>
    </reaction>
</comment>
<comment type="catalytic activity">
    <reaction evidence="1">
        <text>1-tetradecanoylglycerol + H2O = tetradecanoate + glycerol + H(+)</text>
        <dbReference type="Rhea" id="RHEA:44312"/>
        <dbReference type="ChEBI" id="CHEBI:15377"/>
        <dbReference type="ChEBI" id="CHEBI:15378"/>
        <dbReference type="ChEBI" id="CHEBI:17754"/>
        <dbReference type="ChEBI" id="CHEBI:30807"/>
        <dbReference type="ChEBI" id="CHEBI:75562"/>
    </reaction>
</comment>
<comment type="catalytic activity">
    <reaction evidence="1">
        <text>2-hexadecanoylglycerol + H2O = glycerol + hexadecanoate + H(+)</text>
        <dbReference type="Rhea" id="RHEA:39963"/>
        <dbReference type="ChEBI" id="CHEBI:7896"/>
        <dbReference type="ChEBI" id="CHEBI:15377"/>
        <dbReference type="ChEBI" id="CHEBI:15378"/>
        <dbReference type="ChEBI" id="CHEBI:17754"/>
        <dbReference type="ChEBI" id="CHEBI:75455"/>
    </reaction>
</comment>
<comment type="catalytic activity">
    <reaction evidence="1">
        <text>1-(9Z-octadecenoyl)-glycerol + H2O = glycerol + (9Z)-octadecenoate + H(+)</text>
        <dbReference type="Rhea" id="RHEA:38487"/>
        <dbReference type="ChEBI" id="CHEBI:15377"/>
        <dbReference type="ChEBI" id="CHEBI:15378"/>
        <dbReference type="ChEBI" id="CHEBI:17754"/>
        <dbReference type="ChEBI" id="CHEBI:30823"/>
        <dbReference type="ChEBI" id="CHEBI:75342"/>
    </reaction>
</comment>
<comment type="catalytic activity">
    <reaction evidence="1">
        <text>2-(9Z-octadecenoyl)-glycerol + H2O = glycerol + (9Z)-octadecenoate + H(+)</text>
        <dbReference type="Rhea" id="RHEA:38491"/>
        <dbReference type="ChEBI" id="CHEBI:15377"/>
        <dbReference type="ChEBI" id="CHEBI:15378"/>
        <dbReference type="ChEBI" id="CHEBI:17754"/>
        <dbReference type="ChEBI" id="CHEBI:30823"/>
        <dbReference type="ChEBI" id="CHEBI:73990"/>
    </reaction>
</comment>
<comment type="catalytic activity">
    <reaction evidence="1">
        <text>2-(9Z,12Z-octadecadienoyl)-glycerol + H2O = (9Z,12Z)-octadecadienoate + glycerol + H(+)</text>
        <dbReference type="Rhea" id="RHEA:44732"/>
        <dbReference type="ChEBI" id="CHEBI:15377"/>
        <dbReference type="ChEBI" id="CHEBI:15378"/>
        <dbReference type="ChEBI" id="CHEBI:17754"/>
        <dbReference type="ChEBI" id="CHEBI:30245"/>
        <dbReference type="ChEBI" id="CHEBI:75457"/>
    </reaction>
</comment>
<comment type="catalytic activity">
    <reaction evidence="1">
        <text>1-(5Z,8Z,11Z,14Z-eicosatetraenoyl)-glycerol + H2O = glycerol + (5Z,8Z,11Z,14Z)-eicosatetraenoate + H(+)</text>
        <dbReference type="Rhea" id="RHEA:44728"/>
        <dbReference type="ChEBI" id="CHEBI:15377"/>
        <dbReference type="ChEBI" id="CHEBI:15378"/>
        <dbReference type="ChEBI" id="CHEBI:17754"/>
        <dbReference type="ChEBI" id="CHEBI:32395"/>
        <dbReference type="ChEBI" id="CHEBI:75612"/>
    </reaction>
</comment>
<comment type="catalytic activity">
    <reaction evidence="1">
        <text>2-(5Z,8Z,11Z,14Z-eicosatetraenoyl)-glycerol + H2O = glycerol + (5Z,8Z,11Z,14Z)-eicosatetraenoate + H(+)</text>
        <dbReference type="Rhea" id="RHEA:26132"/>
        <dbReference type="ChEBI" id="CHEBI:15377"/>
        <dbReference type="ChEBI" id="CHEBI:15378"/>
        <dbReference type="ChEBI" id="CHEBI:17754"/>
        <dbReference type="ChEBI" id="CHEBI:32395"/>
        <dbReference type="ChEBI" id="CHEBI:52392"/>
    </reaction>
</comment>
<comment type="catalytic activity">
    <reaction evidence="1">
        <text>prostaglandin D2-1-glycerol ester + H2O = prostaglandin D2 + glycerol + H(+)</text>
        <dbReference type="Rhea" id="RHEA:45412"/>
        <dbReference type="ChEBI" id="CHEBI:15377"/>
        <dbReference type="ChEBI" id="CHEBI:15378"/>
        <dbReference type="ChEBI" id="CHEBI:17754"/>
        <dbReference type="ChEBI" id="CHEBI:57406"/>
        <dbReference type="ChEBI" id="CHEBI:85232"/>
    </reaction>
</comment>
<comment type="catalytic activity">
    <reaction evidence="4">
        <text>2-glyceryl-15-deoxy-Delta(12,14)-prostaglandin J2 + H2O = 15-deoxy-Delta(12,14)-prostaglandin J2 + glycerol + H(+)</text>
        <dbReference type="Rhea" id="RHEA:45416"/>
        <dbReference type="ChEBI" id="CHEBI:15377"/>
        <dbReference type="ChEBI" id="CHEBI:15378"/>
        <dbReference type="ChEBI" id="CHEBI:17754"/>
        <dbReference type="ChEBI" id="CHEBI:85236"/>
        <dbReference type="ChEBI" id="CHEBI:85238"/>
    </reaction>
    <physiologicalReaction direction="left-to-right" evidence="4">
        <dbReference type="Rhea" id="RHEA:45417"/>
    </physiologicalReaction>
</comment>
<comment type="catalytic activity">
    <reaction evidence="4">
        <text>1-(9Z,12Z-octadecadienoyl)-glycerol + H2O = (9Z,12Z)-octadecadienoate + glycerol + H(+)</text>
        <dbReference type="Rhea" id="RHEA:48428"/>
        <dbReference type="ChEBI" id="CHEBI:15377"/>
        <dbReference type="ChEBI" id="CHEBI:15378"/>
        <dbReference type="ChEBI" id="CHEBI:17754"/>
        <dbReference type="ChEBI" id="CHEBI:30245"/>
        <dbReference type="ChEBI" id="CHEBI:75568"/>
    </reaction>
    <physiologicalReaction direction="left-to-right" evidence="4">
        <dbReference type="Rhea" id="RHEA:48429"/>
    </physiologicalReaction>
</comment>
<comment type="activity regulation">
    <text evidence="5">Specifically inhibited by alpha-alkylidene-beta-lactone KC01 ((Z)-6-(2-Oxo-4-tridecyloxetan-3-ylidene)hexanamide).</text>
</comment>
<comment type="biophysicochemical properties">
    <kinetics>
        <KM evidence="5">40 uM for 1-octadecanoyl-2-(9Z,12Z-octadecadienoyl)-sn-glycero-3-phosphoserine</KM>
        <Vmax evidence="5">35.0 nmol/min/mg enzyme with 1-octadecanoyl-2-(9Z,12Z-octadecadienoyl)-sn-glycero-3-phosphoserine as substrate</Vmax>
    </kinetics>
</comment>
<comment type="subcellular location">
    <subcellularLocation>
        <location evidence="8">Membrane</location>
        <topology evidence="3">Multi-pass membrane protein</topology>
    </subcellularLocation>
</comment>
<comment type="disruption phenotype">
    <text evidence="5">Mice were born at a much lower frequency than expected and are smaller than wild-type mice throughout development and life (PubMed:25580854). Despite their smaller size, mice appear normal (PubMed:25580854). Metabolomic characterization of brain tissue show decreased lysophosphatidylserines (PubMed:25580854).</text>
</comment>
<comment type="similarity">
    <text evidence="7">Belongs to the AB hydrolase superfamily. ABHD16 family.</text>
</comment>